<gene>
    <name evidence="1" type="primary">hutU</name>
    <name type="ordered locus">Bcer98_2311</name>
</gene>
<feature type="chain" id="PRO_1000082346" description="Urocanate hydratase">
    <location>
        <begin position="1"/>
        <end position="552"/>
    </location>
</feature>
<feature type="active site" evidence="1">
    <location>
        <position position="407"/>
    </location>
</feature>
<feature type="binding site" evidence="1">
    <location>
        <begin position="49"/>
        <end position="50"/>
    </location>
    <ligand>
        <name>NAD(+)</name>
        <dbReference type="ChEBI" id="CHEBI:57540"/>
    </ligand>
</feature>
<feature type="binding site" evidence="1">
    <location>
        <position position="127"/>
    </location>
    <ligand>
        <name>NAD(+)</name>
        <dbReference type="ChEBI" id="CHEBI:57540"/>
    </ligand>
</feature>
<feature type="binding site" evidence="1">
    <location>
        <begin position="173"/>
        <end position="175"/>
    </location>
    <ligand>
        <name>NAD(+)</name>
        <dbReference type="ChEBI" id="CHEBI:57540"/>
    </ligand>
</feature>
<feature type="binding site" evidence="1">
    <location>
        <position position="193"/>
    </location>
    <ligand>
        <name>NAD(+)</name>
        <dbReference type="ChEBI" id="CHEBI:57540"/>
    </ligand>
</feature>
<feature type="binding site" evidence="1">
    <location>
        <begin position="239"/>
        <end position="240"/>
    </location>
    <ligand>
        <name>NAD(+)</name>
        <dbReference type="ChEBI" id="CHEBI:57540"/>
    </ligand>
</feature>
<feature type="binding site" evidence="1">
    <location>
        <begin position="260"/>
        <end position="264"/>
    </location>
    <ligand>
        <name>NAD(+)</name>
        <dbReference type="ChEBI" id="CHEBI:57540"/>
    </ligand>
</feature>
<feature type="binding site" evidence="1">
    <location>
        <begin position="270"/>
        <end position="271"/>
    </location>
    <ligand>
        <name>NAD(+)</name>
        <dbReference type="ChEBI" id="CHEBI:57540"/>
    </ligand>
</feature>
<feature type="binding site" evidence="1">
    <location>
        <position position="319"/>
    </location>
    <ligand>
        <name>NAD(+)</name>
        <dbReference type="ChEBI" id="CHEBI:57540"/>
    </ligand>
</feature>
<feature type="binding site" evidence="1">
    <location>
        <position position="489"/>
    </location>
    <ligand>
        <name>NAD(+)</name>
        <dbReference type="ChEBI" id="CHEBI:57540"/>
    </ligand>
</feature>
<protein>
    <recommendedName>
        <fullName evidence="1">Urocanate hydratase</fullName>
        <shortName evidence="1">Urocanase</shortName>
        <ecNumber evidence="1">4.2.1.49</ecNumber>
    </recommendedName>
    <alternativeName>
        <fullName evidence="1">Imidazolonepropionate hydrolase</fullName>
    </alternativeName>
</protein>
<proteinExistence type="inferred from homology"/>
<dbReference type="EC" id="4.2.1.49" evidence="1"/>
<dbReference type="EMBL" id="CP000764">
    <property type="protein sequence ID" value="ABS22557.1"/>
    <property type="molecule type" value="Genomic_DNA"/>
</dbReference>
<dbReference type="RefSeq" id="WP_012094753.1">
    <property type="nucleotide sequence ID" value="NC_009674.1"/>
</dbReference>
<dbReference type="SMR" id="A7GQZ9"/>
<dbReference type="STRING" id="315749.Bcer98_2311"/>
<dbReference type="GeneID" id="33897582"/>
<dbReference type="KEGG" id="bcy:Bcer98_2311"/>
<dbReference type="eggNOG" id="COG2987">
    <property type="taxonomic scope" value="Bacteria"/>
</dbReference>
<dbReference type="HOGENOM" id="CLU_018868_0_1_9"/>
<dbReference type="OrthoDB" id="9764874at2"/>
<dbReference type="UniPathway" id="UPA00379">
    <property type="reaction ID" value="UER00550"/>
</dbReference>
<dbReference type="Proteomes" id="UP000002300">
    <property type="component" value="Chromosome"/>
</dbReference>
<dbReference type="GO" id="GO:0005737">
    <property type="term" value="C:cytoplasm"/>
    <property type="evidence" value="ECO:0007669"/>
    <property type="project" value="UniProtKB-SubCell"/>
</dbReference>
<dbReference type="GO" id="GO:0016153">
    <property type="term" value="F:urocanate hydratase activity"/>
    <property type="evidence" value="ECO:0007669"/>
    <property type="project" value="UniProtKB-UniRule"/>
</dbReference>
<dbReference type="GO" id="GO:0019556">
    <property type="term" value="P:L-histidine catabolic process to glutamate and formamide"/>
    <property type="evidence" value="ECO:0007669"/>
    <property type="project" value="UniProtKB-UniPathway"/>
</dbReference>
<dbReference type="GO" id="GO:0019557">
    <property type="term" value="P:L-histidine catabolic process to glutamate and formate"/>
    <property type="evidence" value="ECO:0007669"/>
    <property type="project" value="UniProtKB-UniPathway"/>
</dbReference>
<dbReference type="FunFam" id="3.40.50.10730:FF:000001">
    <property type="entry name" value="Urocanate hydratase"/>
    <property type="match status" value="1"/>
</dbReference>
<dbReference type="Gene3D" id="3.40.50.10730">
    <property type="entry name" value="Urocanase like domains"/>
    <property type="match status" value="1"/>
</dbReference>
<dbReference type="Gene3D" id="3.40.1770.10">
    <property type="entry name" value="Urocanase superfamily"/>
    <property type="match status" value="1"/>
</dbReference>
<dbReference type="HAMAP" id="MF_00577">
    <property type="entry name" value="HutU"/>
    <property type="match status" value="1"/>
</dbReference>
<dbReference type="InterPro" id="IPR055351">
    <property type="entry name" value="Urocanase"/>
</dbReference>
<dbReference type="InterPro" id="IPR023637">
    <property type="entry name" value="Urocanase-like"/>
</dbReference>
<dbReference type="InterPro" id="IPR035401">
    <property type="entry name" value="Urocanase_C"/>
</dbReference>
<dbReference type="InterPro" id="IPR038364">
    <property type="entry name" value="Urocanase_central_sf"/>
</dbReference>
<dbReference type="InterPro" id="IPR023636">
    <property type="entry name" value="Urocanase_CS"/>
</dbReference>
<dbReference type="InterPro" id="IPR035400">
    <property type="entry name" value="Urocanase_N"/>
</dbReference>
<dbReference type="InterPro" id="IPR035085">
    <property type="entry name" value="Urocanase_Rossmann-like"/>
</dbReference>
<dbReference type="InterPro" id="IPR036190">
    <property type="entry name" value="Urocanase_sf"/>
</dbReference>
<dbReference type="NCBIfam" id="TIGR01228">
    <property type="entry name" value="hutU"/>
    <property type="match status" value="1"/>
</dbReference>
<dbReference type="NCBIfam" id="NF003820">
    <property type="entry name" value="PRK05414.1"/>
    <property type="match status" value="1"/>
</dbReference>
<dbReference type="PANTHER" id="PTHR12216">
    <property type="entry name" value="UROCANATE HYDRATASE"/>
    <property type="match status" value="1"/>
</dbReference>
<dbReference type="PANTHER" id="PTHR12216:SF4">
    <property type="entry name" value="UROCANATE HYDRATASE"/>
    <property type="match status" value="1"/>
</dbReference>
<dbReference type="Pfam" id="PF01175">
    <property type="entry name" value="Urocanase"/>
    <property type="match status" value="1"/>
</dbReference>
<dbReference type="Pfam" id="PF17392">
    <property type="entry name" value="Urocanase_C"/>
    <property type="match status" value="1"/>
</dbReference>
<dbReference type="Pfam" id="PF17391">
    <property type="entry name" value="Urocanase_N"/>
    <property type="match status" value="1"/>
</dbReference>
<dbReference type="PIRSF" id="PIRSF001423">
    <property type="entry name" value="Urocanate_hydrat"/>
    <property type="match status" value="1"/>
</dbReference>
<dbReference type="SUPFAM" id="SSF111326">
    <property type="entry name" value="Urocanase"/>
    <property type="match status" value="1"/>
</dbReference>
<dbReference type="PROSITE" id="PS01233">
    <property type="entry name" value="UROCANASE"/>
    <property type="match status" value="1"/>
</dbReference>
<sequence>MENVKQTIRAPRGTELQTKGWIQEAALRMLMNNLDPEVAEKPEELVVYGGIGRAARNWESYQAIVDSLKTLESDETLLVQSGKPVAIFKSHEDAPRVLLANSNLVPKWANWEHFRELEQKGLMMYGQMTAGSWIYIGTQGILQGTYETFGEAARQHFGGSLKGTLTLTAGLGGMGGAQPLAVTMNGGVVIAIDVDKRSIERRIEKRYCDMYTESLEEALAVATEYKEKKEPISIGLLGNAAEILPELVSRGITPDLVTDQTSAHDPLNGYVPAGYSLEEATKLRAEDPDRYVQLSKESMKKHVEAMLAMQEKGAIAFDYGNNIRQVAFDEGLEHAFDFPGFVPAFIRPLFCEGKGPFRWVALSGDPEDIYKTDEVILREFAHNEHLCNWIRMARQQVEFQGLPSRICWLGYGERAKFGRIINEMVASGELSAPIVIGRDHLDCGSVASPNRETEGMKDGSDAVADWPILNALINSVNGASWVSVHHGGGVGMGYSLHAGMVIVADGTEAAAKRIERVLTSDPGMGVVRHVDAGYDLAVQTAKEKGVNIPMMK</sequence>
<organism>
    <name type="scientific">Bacillus cytotoxicus (strain DSM 22905 / CIP 110041 / 391-98 / NVH 391-98)</name>
    <dbReference type="NCBI Taxonomy" id="315749"/>
    <lineage>
        <taxon>Bacteria</taxon>
        <taxon>Bacillati</taxon>
        <taxon>Bacillota</taxon>
        <taxon>Bacilli</taxon>
        <taxon>Bacillales</taxon>
        <taxon>Bacillaceae</taxon>
        <taxon>Bacillus</taxon>
        <taxon>Bacillus cereus group</taxon>
    </lineage>
</organism>
<comment type="function">
    <text evidence="1">Catalyzes the conversion of urocanate to 4-imidazolone-5-propionate.</text>
</comment>
<comment type="catalytic activity">
    <reaction evidence="1">
        <text>4-imidazolone-5-propanoate = trans-urocanate + H2O</text>
        <dbReference type="Rhea" id="RHEA:13101"/>
        <dbReference type="ChEBI" id="CHEBI:15377"/>
        <dbReference type="ChEBI" id="CHEBI:17771"/>
        <dbReference type="ChEBI" id="CHEBI:77893"/>
        <dbReference type="EC" id="4.2.1.49"/>
    </reaction>
</comment>
<comment type="cofactor">
    <cofactor evidence="1">
        <name>NAD(+)</name>
        <dbReference type="ChEBI" id="CHEBI:57540"/>
    </cofactor>
    <text evidence="1">Binds 1 NAD(+) per subunit.</text>
</comment>
<comment type="pathway">
    <text evidence="1">Amino-acid degradation; L-histidine degradation into L-glutamate; N-formimidoyl-L-glutamate from L-histidine: step 2/3.</text>
</comment>
<comment type="subcellular location">
    <subcellularLocation>
        <location evidence="1">Cytoplasm</location>
    </subcellularLocation>
</comment>
<comment type="similarity">
    <text evidence="1">Belongs to the urocanase family.</text>
</comment>
<accession>A7GQZ9</accession>
<keyword id="KW-0963">Cytoplasm</keyword>
<keyword id="KW-0369">Histidine metabolism</keyword>
<keyword id="KW-0456">Lyase</keyword>
<keyword id="KW-0520">NAD</keyword>
<name>HUTU_BACCN</name>
<evidence type="ECO:0000255" key="1">
    <source>
        <dbReference type="HAMAP-Rule" id="MF_00577"/>
    </source>
</evidence>
<reference key="1">
    <citation type="journal article" date="2008" name="Chem. Biol. Interact.">
        <title>Extending the Bacillus cereus group genomics to putative food-borne pathogens of different toxicity.</title>
        <authorList>
            <person name="Lapidus A."/>
            <person name="Goltsman E."/>
            <person name="Auger S."/>
            <person name="Galleron N."/>
            <person name="Segurens B."/>
            <person name="Dossat C."/>
            <person name="Land M.L."/>
            <person name="Broussolle V."/>
            <person name="Brillard J."/>
            <person name="Guinebretiere M.-H."/>
            <person name="Sanchis V."/>
            <person name="Nguen-the C."/>
            <person name="Lereclus D."/>
            <person name="Richardson P."/>
            <person name="Wincker P."/>
            <person name="Weissenbach J."/>
            <person name="Ehrlich S.D."/>
            <person name="Sorokin A."/>
        </authorList>
    </citation>
    <scope>NUCLEOTIDE SEQUENCE [LARGE SCALE GENOMIC DNA]</scope>
    <source>
        <strain>DSM 22905 / CIP 110041 / 391-98 / NVH 391-98</strain>
    </source>
</reference>